<protein>
    <recommendedName>
        <fullName>Vang-like protein 2</fullName>
    </recommendedName>
    <alternativeName>
        <fullName>Loop-tail protein 1</fullName>
    </alternativeName>
    <alternativeName>
        <fullName>Loop-tail-associated protein</fullName>
    </alternativeName>
    <alternativeName>
        <fullName>Van Gogh-like protein 2</fullName>
    </alternativeName>
</protein>
<keyword id="KW-1003">Cell membrane</keyword>
<keyword id="KW-0217">Developmental protein</keyword>
<keyword id="KW-0225">Disease variant</keyword>
<keyword id="KW-0472">Membrane</keyword>
<keyword id="KW-1185">Reference proteome</keyword>
<keyword id="KW-0812">Transmembrane</keyword>
<keyword id="KW-1133">Transmembrane helix</keyword>
<gene>
    <name type="primary">Vangl2</name>
    <name type="synonym">Lpp1</name>
    <name type="synonym">Ltap</name>
</gene>
<comment type="function">
    <text evidence="7 10 11">Involved in the control of early morphogenesis and patterning of both axial midline structures and the development of neural plate. Plays a role in the regulation of planar cell polarity, particularly in the orientation of stereociliary bundles in the cochlea. Required for polarization and movement of myocardializing cells in the outflow tract and seems to act via RHOA signaling to regulate this process. Required for cell surface localization of FZD3 and FZD6 in the inner ear (PubMed:16495441).</text>
</comment>
<comment type="subunit">
    <text evidence="1 8 9 12 13">Homodimer and heterodimer with Vangl1. Interacts through its C-terminal region with the N-terminal half of DVL1, DVL2 and DVL3. The PDZ domain of DVL1, DVL2 and DVL3 is required for the interaction. Variants Glu-255 and Asn-464 impair interaction with the DVL proteins. Also interacts with the PDZ domains of MAGI3, SCRIB/SCRB1 and FZD3 (PubMed:15195140). Interacts with PRICKLE3 (By similarity).</text>
</comment>
<comment type="interaction">
    <interactant intactId="EBI-1750744">
        <id>Q91ZD4</id>
    </interactant>
    <interactant intactId="EBI-3870250">
        <id>Q8R4A3</id>
        <label>Dact1</label>
    </interactant>
    <organismsDiffer>false</organismsDiffer>
    <experiments>3</experiments>
</comment>
<comment type="interaction">
    <interactant intactId="EBI-1750744">
        <id>Q91ZD4</id>
    </interactant>
    <interactant intactId="EBI-1538407">
        <id>P51141</id>
        <label>Dvl1</label>
    </interactant>
    <organismsDiffer>false</organismsDiffer>
    <experiments>2</experiments>
</comment>
<comment type="interaction">
    <interactant intactId="EBI-1750744">
        <id>Q91ZD4</id>
    </interactant>
    <interactant intactId="EBI-641940">
        <id>Q60838</id>
        <label>Dvl2</label>
    </interactant>
    <organismsDiffer>false</organismsDiffer>
    <experiments>4</experiments>
</comment>
<comment type="interaction">
    <interactant intactId="EBI-1750744">
        <id>Q91ZD4</id>
    </interactant>
    <interactant intactId="EBI-1538450">
        <id>Q61062</id>
        <label>Dvl3</label>
    </interactant>
    <organismsDiffer>false</organismsDiffer>
    <experiments>2</experiments>
</comment>
<comment type="interaction">
    <interactant intactId="EBI-1750744">
        <id>Q91ZD4</id>
    </interactant>
    <interactant intactId="EBI-375655">
        <id>P31016</id>
        <label>Dlg4</label>
    </interactant>
    <organismsDiffer>true</organismsDiffer>
    <experiments>6</experiments>
</comment>
<comment type="subcellular location">
    <subcellularLocation>
        <location evidence="13">Cell membrane</location>
        <topology evidence="13">Multi-pass membrane protein</topology>
    </subcellularLocation>
</comment>
<comment type="tissue specificity">
    <text evidence="4 6 7 12">Primarily expressed in the brain and epididymis. Not detected in the cochlea of Lp mice.</text>
</comment>
<comment type="developmental stage">
    <text evidence="4 7 10">In the embryo, strongly expressed in the neuroectoderm from the earliest stages of neural induction through the late stages of neural tube closure. Detected in the dorso-ventral axis of the neural tube, but not in the floor plate. Expression is low at day 7 dpc; it peaks at 11 dpc, and it remains strong at 15 dpc and 17 dpc. Also expressed in the cochlear epithelium at days 14.5 dpc and 16.5 dpc. Detected at low levels in the outflow tract myocardium from 9.5 dpc with levels increasing by 11.5 dpc.</text>
</comment>
<comment type="disease">
    <text evidence="5">Defects in Vangl2 are a cause of the loop-tail (Lp) mutant phenotype. Heterozygous Lp mice exhibit a characteristic looped tail, while homozygous embryos show a completely open neural tube in the hindbrain and spinal region, a condition similar to the severe craniorachischisis defect in humans. Homozygotes also have complex cardiovascular defects including double-outlet right ventricle, perimembranous ventricular defects, double-sided aortic arch and associated abnormalities in the aortic arch arteries. Homozygotes show cytoplasmic accumulation of Vangl2 instead of the normal membrane localization, and Rhoa expression, which is detected in the mesenchymal cushion cells adjacent to the outflow tract, is lost in homozygotes. Homozygous embryos typically die shortly before or at birth.</text>
</comment>
<comment type="similarity">
    <text evidence="14">Belongs to the Vang family.</text>
</comment>
<accession>Q91ZD4</accession>
<accession>Q923Z8</accession>
<proteinExistence type="evidence at protein level"/>
<reference key="1">
    <citation type="journal article" date="2001" name="Hum. Mol. Genet.">
        <title>Severe neural tube defects in the loop-tail mouse result from mutation of Lpp1, a novel gene involved in floor plate specification.</title>
        <authorList>
            <person name="Murdoch J.N."/>
            <person name="Doudney K."/>
            <person name="Paternotte C."/>
            <person name="Copp A.J."/>
            <person name="Stanier P."/>
        </authorList>
    </citation>
    <scope>NUCLEOTIDE SEQUENCE [MRNA]</scope>
    <scope>TISSUE SPECIFICITY</scope>
    <scope>VARIANT LP ASN-464</scope>
    <source>
        <strain>C57BL/6J</strain>
    </source>
</reference>
<reference key="2">
    <citation type="journal article" date="2001" name="Nat. Genet.">
        <title>Ltap, a mammalian homolog of Drosophila Strabismus/Van Gogh, is altered in the mouse neural tube mutant loop-tail.</title>
        <authorList>
            <person name="Kibar Z."/>
            <person name="Vogan K.J."/>
            <person name="Groulx N."/>
            <person name="Justice M.J."/>
            <person name="Underhill D.A."/>
            <person name="Gros P."/>
        </authorList>
    </citation>
    <scope>NUCLEOTIDE SEQUENCE [MRNA]</scope>
    <scope>DEVELOPMENTAL STAGE</scope>
    <scope>TISSUE SPECIFICITY</scope>
    <scope>VARIANTS LP GLU-255 AND ASN-464</scope>
    <source>
        <strain>C57BL/6J</strain>
    </source>
</reference>
<reference key="3">
    <citation type="journal article" date="2004" name="Genome Res.">
        <title>The status, quality, and expansion of the NIH full-length cDNA project: the Mammalian Gene Collection (MGC).</title>
        <authorList>
            <consortium name="The MGC Project Team"/>
        </authorList>
    </citation>
    <scope>NUCLEOTIDE SEQUENCE [LARGE SCALE MRNA]</scope>
    <source>
        <tissue>Limb</tissue>
    </source>
</reference>
<reference key="4">
    <citation type="journal article" date="2001" name="Circ. Res.">
        <title>Cardiovascular defects associated with abnormalities in midline development in the loop-tail mouse mutant.</title>
        <authorList>
            <person name="Henderson D.J."/>
            <person name="Conway S.J."/>
            <person name="Greene N.D.E."/>
            <person name="Gerrelli D."/>
            <person name="Murdoch J.N."/>
            <person name="Anderson R.H."/>
            <person name="Copp A.J."/>
        </authorList>
    </citation>
    <scope>DISEASE</scope>
</reference>
<reference key="5">
    <citation type="journal article" date="2003" name="Nature">
        <title>Identification of Vangl2 and Scrb1 as planar polarity genes in mammals.</title>
        <authorList>
            <person name="Montcouquiol M."/>
            <person name="Rachel R.A."/>
            <person name="Lanford P.J."/>
            <person name="Copeland N.G."/>
            <person name="Jenkins N.A."/>
            <person name="Kelley M.W."/>
        </authorList>
    </citation>
    <scope>FUNCTION</scope>
    <scope>DEVELOPMENTAL STAGE</scope>
    <scope>TISSUE SPECIFICITY</scope>
</reference>
<reference key="6">
    <citation type="journal article" date="2004" name="J. Biol. Chem.">
        <title>Independent mutations in mouse Vangl2 that cause neural tube defects in looptail mice impair interaction with members of the Dishevelled family.</title>
        <authorList>
            <person name="Torban E."/>
            <person name="Wang H.-J."/>
            <person name="Groulx N."/>
            <person name="Gros P."/>
        </authorList>
    </citation>
    <scope>INTERACTION WITH DVL1; DVL2 AND DVL3</scope>
</reference>
<reference key="7">
    <citation type="journal article" date="2004" name="Oncogene">
        <title>MAGI-3 is involved in the regulation of the JNK signaling pathway as a scaffold protein for frizzled and Ltap.</title>
        <authorList>
            <person name="Yao R."/>
            <person name="Natsume Y."/>
            <person name="Noda T."/>
        </authorList>
    </citation>
    <scope>INTERACTION WITH MAGI3</scope>
</reference>
<reference key="8">
    <citation type="journal article" date="2005" name="Circ. Res.">
        <title>Vangl2 acts via RhoA signaling to regulate polarized cell movements during development of the proximal outflow tract.</title>
        <authorList>
            <person name="Phillips H.M."/>
            <person name="Murdoch J.N."/>
            <person name="Chaudhry B."/>
            <person name="Copp A.J."/>
            <person name="Henderson D.J."/>
        </authorList>
    </citation>
    <scope>FUNCTION</scope>
    <scope>DEVELOPMENTAL STAGE</scope>
</reference>
<reference key="9">
    <citation type="journal article" date="2006" name="J. Neurosci.">
        <title>The role of Frizzled3 and Frizzled6 in neural tube closure and in the planar polarity of inner-ear sensory hair cells.</title>
        <authorList>
            <person name="Wang Y."/>
            <person name="Guo N."/>
            <person name="Nathans J."/>
        </authorList>
    </citation>
    <scope>FUNCTION</scope>
</reference>
<reference key="10">
    <citation type="journal article" date="2006" name="J. Neurosci.">
        <title>Asymmetric localization of Vangl2 and Fz3 indicate novel mechanisms for planar cell polarity in mammals.</title>
        <authorList>
            <person name="Montcouquiol M."/>
            <person name="Sans N."/>
            <person name="Huss D."/>
            <person name="Kach J."/>
            <person name="Dickman J.D."/>
            <person name="Forge A."/>
            <person name="Rachel R.A."/>
            <person name="Copeland N.G."/>
            <person name="Jenkins N.A."/>
            <person name="Bogani D."/>
            <person name="Murdoch J."/>
            <person name="Warchol M.E."/>
            <person name="Wenthold R.J."/>
            <person name="Kelley M.W."/>
        </authorList>
    </citation>
    <scope>INTERACTION WITH FZD3 AND SCRIB</scope>
    <scope>TISSUE SPECIFICITY</scope>
</reference>
<reference key="11">
    <citation type="journal article" date="2012" name="PLoS ONE">
        <title>Molecular characterisation of endogenous Vangl2/Vangl1 heteromeric protein complexes.</title>
        <authorList>
            <person name="Belotti E."/>
            <person name="Puvirajesinghe T.M."/>
            <person name="Audebert S."/>
            <person name="Baudelet E."/>
            <person name="Camoin L."/>
            <person name="Pierres M."/>
            <person name="Lasvaux L."/>
            <person name="Ferracci G."/>
            <person name="Montcouquiol M."/>
            <person name="Borg J.P."/>
        </authorList>
    </citation>
    <scope>SUBCELLULAR LOCATION</scope>
    <scope>SUBUNIT</scope>
</reference>
<feature type="chain" id="PRO_0000186196" description="Vang-like protein 2">
    <location>
        <begin position="1"/>
        <end position="521"/>
    </location>
</feature>
<feature type="topological domain" description="Cytoplasmic" evidence="2">
    <location>
        <begin position="1"/>
        <end position="108"/>
    </location>
</feature>
<feature type="transmembrane region" description="Helical; Name=1" evidence="2">
    <location>
        <begin position="109"/>
        <end position="129"/>
    </location>
</feature>
<feature type="topological domain" description="Extracellular" evidence="2">
    <location>
        <begin position="130"/>
        <end position="147"/>
    </location>
</feature>
<feature type="transmembrane region" description="Helical; Name=2" evidence="2">
    <location>
        <begin position="148"/>
        <end position="168"/>
    </location>
</feature>
<feature type="topological domain" description="Cytoplasmic" evidence="2">
    <location>
        <begin position="169"/>
        <end position="178"/>
    </location>
</feature>
<feature type="transmembrane region" description="Helical; Name=3" evidence="2">
    <location>
        <begin position="179"/>
        <end position="199"/>
    </location>
</feature>
<feature type="topological domain" description="Extracellular" evidence="2">
    <location>
        <begin position="200"/>
        <end position="217"/>
    </location>
</feature>
<feature type="transmembrane region" description="Helical; Name=4" evidence="2">
    <location>
        <begin position="218"/>
        <end position="238"/>
    </location>
</feature>
<feature type="topological domain" description="Cytoplasmic" evidence="2">
    <location>
        <begin position="239"/>
        <end position="521"/>
    </location>
</feature>
<feature type="region of interest" description="Disordered" evidence="3">
    <location>
        <begin position="1"/>
        <end position="81"/>
    </location>
</feature>
<feature type="compositionally biased region" description="Basic residues" evidence="3">
    <location>
        <begin position="15"/>
        <end position="33"/>
    </location>
</feature>
<feature type="compositionally biased region" description="Basic and acidic residues" evidence="3">
    <location>
        <begin position="57"/>
        <end position="67"/>
    </location>
</feature>
<feature type="compositionally biased region" description="Low complexity" evidence="3">
    <location>
        <begin position="69"/>
        <end position="81"/>
    </location>
</feature>
<feature type="sequence variant" description="In Lp." evidence="4">
    <original>D</original>
    <variation>E</variation>
    <location>
        <position position="255"/>
    </location>
</feature>
<feature type="sequence variant" description="In Lp." evidence="4 6">
    <original>S</original>
    <variation>N</variation>
    <location>
        <position position="464"/>
    </location>
</feature>
<sequence length="521" mass="59771">MDTESQYSGYSYKSGHSRSSRKHRDRRDRHRSKSRDGSRGDKSVTIQAPGEPLLDNESTRGDERDDNWGETTTVVTGTSEHSISHDDLTRIAKDMEDSVPLDCSRHLGVAAGAILALLSFLTPLAFLLLPPLLWREELEPCGTACEGLFISVAFKLLILLLGSWALFFRRPKASLPRVFVLRALLMVLVFLLVISYWLFYGVRILDARERSYQGVVQFAVSLVDALLFVHYLAVVLLELRQLQPQFTLKVVRSTDGASRFYNVGHLSIQRVAVWILEKYYHDFPVYNPALLNLPKSVLAKKVSGFKVYSLGEENSTNNSTGQSRAVIAAAARRRDNSHNEYYYEEAEHERRVRKRRARLVVAVEEAFTHIKRLQEEEQKNPREVMDPREAAQAIFASMARAMQKYLRTTKQQPYHTMESILQHLEFCITHDMTPKAFLERYLAAGPTIQYHKERWLAKQWTLVSEEPVTNGLKDGIVFLLKRQDFSLVVSTKKVPFFKLSEEFVDPKSHKFVMRLQSETSV</sequence>
<dbReference type="EMBL" id="AY035370">
    <property type="protein sequence ID" value="AAK63188.3"/>
    <property type="molecule type" value="mRNA"/>
</dbReference>
<dbReference type="EMBL" id="AF365875">
    <property type="protein sequence ID" value="AAK91927.1"/>
    <property type="molecule type" value="mRNA"/>
</dbReference>
<dbReference type="EMBL" id="BC052195">
    <property type="protein sequence ID" value="AAH52195.1"/>
    <property type="molecule type" value="mRNA"/>
</dbReference>
<dbReference type="CCDS" id="CCDS15505.1"/>
<dbReference type="RefSeq" id="NP_277044.1">
    <property type="nucleotide sequence ID" value="NM_033509.4"/>
</dbReference>
<dbReference type="RefSeq" id="XP_006497114.1">
    <property type="nucleotide sequence ID" value="XM_006497051.5"/>
</dbReference>
<dbReference type="RefSeq" id="XP_006497115.1">
    <property type="nucleotide sequence ID" value="XM_006497052.5"/>
</dbReference>
<dbReference type="RefSeq" id="XP_006497116.1">
    <property type="nucleotide sequence ID" value="XM_006497053.5"/>
</dbReference>
<dbReference type="RefSeq" id="XP_006497117.1">
    <property type="nucleotide sequence ID" value="XM_006497054.5"/>
</dbReference>
<dbReference type="RefSeq" id="XP_017168497.1">
    <property type="nucleotide sequence ID" value="XM_017313008.3"/>
</dbReference>
<dbReference type="RefSeq" id="XP_036010387.1">
    <property type="nucleotide sequence ID" value="XM_036154494.1"/>
</dbReference>
<dbReference type="RefSeq" id="XP_036010388.1">
    <property type="nucleotide sequence ID" value="XM_036154495.1"/>
</dbReference>
<dbReference type="SMR" id="Q91ZD4"/>
<dbReference type="BioGRID" id="220314">
    <property type="interactions" value="10"/>
</dbReference>
<dbReference type="CORUM" id="Q91ZD4"/>
<dbReference type="FunCoup" id="Q91ZD4">
    <property type="interactions" value="918"/>
</dbReference>
<dbReference type="IntAct" id="Q91ZD4">
    <property type="interactions" value="11"/>
</dbReference>
<dbReference type="MINT" id="Q91ZD4"/>
<dbReference type="STRING" id="10090.ENSMUSP00000106894"/>
<dbReference type="iPTMnet" id="Q91ZD4"/>
<dbReference type="PhosphoSitePlus" id="Q91ZD4"/>
<dbReference type="SwissPalm" id="Q91ZD4"/>
<dbReference type="PaxDb" id="10090-ENSMUSP00000027837"/>
<dbReference type="ProteomicsDB" id="298270"/>
<dbReference type="Pumba" id="Q91ZD4"/>
<dbReference type="Antibodypedia" id="34278">
    <property type="antibodies" value="229 antibodies from 31 providers"/>
</dbReference>
<dbReference type="DNASU" id="93840"/>
<dbReference type="Ensembl" id="ENSMUST00000027837.13">
    <property type="protein sequence ID" value="ENSMUSP00000027837.7"/>
    <property type="gene ID" value="ENSMUSG00000026556.17"/>
</dbReference>
<dbReference type="Ensembl" id="ENSMUST00000111263.9">
    <property type="protein sequence ID" value="ENSMUSP00000106894.3"/>
    <property type="gene ID" value="ENSMUSG00000026556.17"/>
</dbReference>
<dbReference type="GeneID" id="93840"/>
<dbReference type="KEGG" id="mmu:93840"/>
<dbReference type="UCSC" id="uc007dpi.1">
    <property type="organism name" value="mouse"/>
</dbReference>
<dbReference type="AGR" id="MGI:2135272"/>
<dbReference type="CTD" id="57216"/>
<dbReference type="MGI" id="MGI:2135272">
    <property type="gene designation" value="Vangl2"/>
</dbReference>
<dbReference type="VEuPathDB" id="HostDB:ENSMUSG00000026556"/>
<dbReference type="eggNOG" id="KOG3814">
    <property type="taxonomic scope" value="Eukaryota"/>
</dbReference>
<dbReference type="GeneTree" id="ENSGT00390000012496"/>
<dbReference type="HOGENOM" id="CLU_015742_1_0_1"/>
<dbReference type="InParanoid" id="Q91ZD4"/>
<dbReference type="OrthoDB" id="80860at9989"/>
<dbReference type="TreeFam" id="TF313467"/>
<dbReference type="Reactome" id="R-MMU-9696264">
    <property type="pathway name" value="RND3 GTPase cycle"/>
</dbReference>
<dbReference type="Reactome" id="R-MMU-9696270">
    <property type="pathway name" value="RND2 GTPase cycle"/>
</dbReference>
<dbReference type="Reactome" id="R-MMU-9696273">
    <property type="pathway name" value="RND1 GTPase cycle"/>
</dbReference>
<dbReference type="BioGRID-ORCS" id="93840">
    <property type="hits" value="2 hits in 78 CRISPR screens"/>
</dbReference>
<dbReference type="CD-CODE" id="CE726F99">
    <property type="entry name" value="Postsynaptic density"/>
</dbReference>
<dbReference type="ChiTaRS" id="Vangl2">
    <property type="organism name" value="mouse"/>
</dbReference>
<dbReference type="PRO" id="PR:Q91ZD4"/>
<dbReference type="Proteomes" id="UP000000589">
    <property type="component" value="Chromosome 1"/>
</dbReference>
<dbReference type="RNAct" id="Q91ZD4">
    <property type="molecule type" value="protein"/>
</dbReference>
<dbReference type="Bgee" id="ENSMUSG00000026556">
    <property type="expression patterns" value="Expressed in ventricular zone and 235 other cell types or tissues"/>
</dbReference>
<dbReference type="ExpressionAtlas" id="Q91ZD4">
    <property type="expression patterns" value="baseline and differential"/>
</dbReference>
<dbReference type="GO" id="GO:0090651">
    <property type="term" value="C:apical cytoplasm"/>
    <property type="evidence" value="ECO:0000314"/>
    <property type="project" value="MGI"/>
</dbReference>
<dbReference type="GO" id="GO:0016324">
    <property type="term" value="C:apical plasma membrane"/>
    <property type="evidence" value="ECO:0000314"/>
    <property type="project" value="MGI"/>
</dbReference>
<dbReference type="GO" id="GO:0016323">
    <property type="term" value="C:basolateral plasma membrane"/>
    <property type="evidence" value="ECO:0000314"/>
    <property type="project" value="UniProtKB"/>
</dbReference>
<dbReference type="GO" id="GO:0071944">
    <property type="term" value="C:cell periphery"/>
    <property type="evidence" value="ECO:0000314"/>
    <property type="project" value="MGI"/>
</dbReference>
<dbReference type="GO" id="GO:0060187">
    <property type="term" value="C:cell pole"/>
    <property type="evidence" value="ECO:0000314"/>
    <property type="project" value="MGI"/>
</dbReference>
<dbReference type="GO" id="GO:0005911">
    <property type="term" value="C:cell-cell junction"/>
    <property type="evidence" value="ECO:0000314"/>
    <property type="project" value="UniProtKB"/>
</dbReference>
<dbReference type="GO" id="GO:0030134">
    <property type="term" value="C:COPII-coated ER to Golgi transport vesicle"/>
    <property type="evidence" value="ECO:0000314"/>
    <property type="project" value="MGI"/>
</dbReference>
<dbReference type="GO" id="GO:0098978">
    <property type="term" value="C:glutamatergic synapse"/>
    <property type="evidence" value="ECO:0000314"/>
    <property type="project" value="SynGO"/>
</dbReference>
<dbReference type="GO" id="GO:0016328">
    <property type="term" value="C:lateral plasma membrane"/>
    <property type="evidence" value="ECO:0000314"/>
    <property type="project" value="MGI"/>
</dbReference>
<dbReference type="GO" id="GO:0016020">
    <property type="term" value="C:membrane"/>
    <property type="evidence" value="ECO:0000250"/>
    <property type="project" value="MGI"/>
</dbReference>
<dbReference type="GO" id="GO:0005886">
    <property type="term" value="C:plasma membrane"/>
    <property type="evidence" value="ECO:0000314"/>
    <property type="project" value="MGI"/>
</dbReference>
<dbReference type="GO" id="GO:0098839">
    <property type="term" value="C:postsynaptic density membrane"/>
    <property type="evidence" value="ECO:0000314"/>
    <property type="project" value="SynGO"/>
</dbReference>
<dbReference type="GO" id="GO:0001725">
    <property type="term" value="C:stress fiber"/>
    <property type="evidence" value="ECO:0000314"/>
    <property type="project" value="MGI"/>
</dbReference>
<dbReference type="GO" id="GO:0009952">
    <property type="term" value="P:anterior/posterior pattern specification"/>
    <property type="evidence" value="ECO:0000315"/>
    <property type="project" value="MGI"/>
</dbReference>
<dbReference type="GO" id="GO:0045176">
    <property type="term" value="P:apical protein localization"/>
    <property type="evidence" value="ECO:0000315"/>
    <property type="project" value="MGI"/>
</dbReference>
<dbReference type="GO" id="GO:0001569">
    <property type="term" value="P:branching involved in blood vessel morphogenesis"/>
    <property type="evidence" value="ECO:0000304"/>
    <property type="project" value="DFLAT"/>
</dbReference>
<dbReference type="GO" id="GO:0060947">
    <property type="term" value="P:cardiac vascular smooth muscle cell differentiation"/>
    <property type="evidence" value="ECO:0000304"/>
    <property type="project" value="DFLAT"/>
</dbReference>
<dbReference type="GO" id="GO:0035787">
    <property type="term" value="P:cell migration involved in kidney development"/>
    <property type="evidence" value="ECO:0000315"/>
    <property type="project" value="UniProtKB"/>
</dbReference>
<dbReference type="GO" id="GO:0090102">
    <property type="term" value="P:cochlea development"/>
    <property type="evidence" value="ECO:0000316"/>
    <property type="project" value="MGI"/>
</dbReference>
<dbReference type="GO" id="GO:0090103">
    <property type="term" value="P:cochlea morphogenesis"/>
    <property type="evidence" value="ECO:0000315"/>
    <property type="project" value="MGI"/>
</dbReference>
<dbReference type="GO" id="GO:0060028">
    <property type="term" value="P:convergent extension involved in axis elongation"/>
    <property type="evidence" value="ECO:0000315"/>
    <property type="project" value="MGI"/>
</dbReference>
<dbReference type="GO" id="GO:0022007">
    <property type="term" value="P:convergent extension involved in neural plate elongation"/>
    <property type="evidence" value="ECO:0000315"/>
    <property type="project" value="MGI"/>
</dbReference>
<dbReference type="GO" id="GO:0060029">
    <property type="term" value="P:convergent extension involved in organogenesis"/>
    <property type="evidence" value="ECO:0000316"/>
    <property type="project" value="MGI"/>
</dbReference>
<dbReference type="GO" id="GO:0048546">
    <property type="term" value="P:digestive tract morphogenesis"/>
    <property type="evidence" value="ECO:0000316"/>
    <property type="project" value="MGI"/>
</dbReference>
<dbReference type="GO" id="GO:0036514">
    <property type="term" value="P:dopaminergic neuron axon guidance"/>
    <property type="evidence" value="ECO:0000315"/>
    <property type="project" value="ParkinsonsUK-UCL"/>
</dbReference>
<dbReference type="GO" id="GO:0003347">
    <property type="term" value="P:epicardial cell to mesenchymal cell transition"/>
    <property type="evidence" value="ECO:0000304"/>
    <property type="project" value="DFLAT"/>
</dbReference>
<dbReference type="GO" id="GO:0048105">
    <property type="term" value="P:establishment of body hair planar orientation"/>
    <property type="evidence" value="ECO:0000315"/>
    <property type="project" value="MGI"/>
</dbReference>
<dbReference type="GO" id="GO:0090162">
    <property type="term" value="P:establishment of epithelial cell polarity"/>
    <property type="evidence" value="ECO:0000304"/>
    <property type="project" value="DFLAT"/>
</dbReference>
<dbReference type="GO" id="GO:0001736">
    <property type="term" value="P:establishment of planar polarity"/>
    <property type="evidence" value="ECO:0000315"/>
    <property type="project" value="UniProtKB"/>
</dbReference>
<dbReference type="GO" id="GO:0090177">
    <property type="term" value="P:establishment of planar polarity involved in neural tube closure"/>
    <property type="evidence" value="ECO:0000315"/>
    <property type="project" value="MGI"/>
</dbReference>
<dbReference type="GO" id="GO:0045197">
    <property type="term" value="P:establishment or maintenance of epithelial cell apical/basal polarity"/>
    <property type="evidence" value="ECO:0000315"/>
    <property type="project" value="MGI"/>
</dbReference>
<dbReference type="GO" id="GO:0032835">
    <property type="term" value="P:glomerulus development"/>
    <property type="evidence" value="ECO:0000315"/>
    <property type="project" value="MGI"/>
</dbReference>
<dbReference type="GO" id="GO:0001942">
    <property type="term" value="P:hair follicle development"/>
    <property type="evidence" value="ECO:0000315"/>
    <property type="project" value="MGI"/>
</dbReference>
<dbReference type="GO" id="GO:0001947">
    <property type="term" value="P:heart looping"/>
    <property type="evidence" value="ECO:0000315"/>
    <property type="project" value="UniProtKB"/>
</dbReference>
<dbReference type="GO" id="GO:0015012">
    <property type="term" value="P:heparan sulfate proteoglycan biosynthetic process"/>
    <property type="evidence" value="ECO:0000315"/>
    <property type="project" value="MGI"/>
</dbReference>
<dbReference type="GO" id="GO:0060119">
    <property type="term" value="P:inner ear receptor cell development"/>
    <property type="evidence" value="ECO:0000316"/>
    <property type="project" value="MGI"/>
</dbReference>
<dbReference type="GO" id="GO:0060122">
    <property type="term" value="P:inner ear receptor cell stereocilium organization"/>
    <property type="evidence" value="ECO:0000315"/>
    <property type="project" value="MGI"/>
</dbReference>
<dbReference type="GO" id="GO:0060993">
    <property type="term" value="P:kidney morphogenesis"/>
    <property type="evidence" value="ECO:0000315"/>
    <property type="project" value="MGI"/>
</dbReference>
<dbReference type="GO" id="GO:0060490">
    <property type="term" value="P:lateral sprouting involved in lung morphogenesis"/>
    <property type="evidence" value="ECO:0000315"/>
    <property type="project" value="MGI"/>
</dbReference>
<dbReference type="GO" id="GO:0003149">
    <property type="term" value="P:membranous septum morphogenesis"/>
    <property type="evidence" value="ECO:0000316"/>
    <property type="project" value="MGI"/>
</dbReference>
<dbReference type="GO" id="GO:0003150">
    <property type="term" value="P:muscular septum morphogenesis"/>
    <property type="evidence" value="ECO:0000316"/>
    <property type="project" value="MGI"/>
</dbReference>
<dbReference type="GO" id="GO:0001843">
    <property type="term" value="P:neural tube closure"/>
    <property type="evidence" value="ECO:0000315"/>
    <property type="project" value="MGI"/>
</dbReference>
<dbReference type="GO" id="GO:0035567">
    <property type="term" value="P:non-canonical Wnt signaling pathway"/>
    <property type="evidence" value="ECO:0000315"/>
    <property type="project" value="MGI"/>
</dbReference>
<dbReference type="GO" id="GO:1905515">
    <property type="term" value="P:non-motile cilium assembly"/>
    <property type="evidence" value="ECO:0000316"/>
    <property type="project" value="MGI"/>
</dbReference>
<dbReference type="GO" id="GO:0060488">
    <property type="term" value="P:orthogonal dichotomous subdivision of terminal units involved in lung branching morphogenesis"/>
    <property type="evidence" value="ECO:0000315"/>
    <property type="project" value="MGI"/>
</dbReference>
<dbReference type="GO" id="GO:0003148">
    <property type="term" value="P:outflow tract septum morphogenesis"/>
    <property type="evidence" value="ECO:0000304"/>
    <property type="project" value="DFLAT"/>
</dbReference>
<dbReference type="GO" id="GO:0060489">
    <property type="term" value="P:planar dichotomous subdivision of terminal units involved in lung branching morphogenesis"/>
    <property type="evidence" value="ECO:0000315"/>
    <property type="project" value="MGI"/>
</dbReference>
<dbReference type="GO" id="GO:0036342">
    <property type="term" value="P:post-anal tail morphogenesis"/>
    <property type="evidence" value="ECO:0000315"/>
    <property type="project" value="MGI"/>
</dbReference>
<dbReference type="GO" id="GO:0032956">
    <property type="term" value="P:regulation of actin cytoskeleton organization"/>
    <property type="evidence" value="ECO:0000315"/>
    <property type="project" value="MGI"/>
</dbReference>
<dbReference type="GO" id="GO:0090175">
    <property type="term" value="P:regulation of establishment of planar polarity"/>
    <property type="evidence" value="ECO:0000316"/>
    <property type="project" value="MGI"/>
</dbReference>
<dbReference type="GO" id="GO:1905806">
    <property type="term" value="P:regulation of synapse pruning"/>
    <property type="evidence" value="ECO:0000314"/>
    <property type="project" value="SynGO"/>
</dbReference>
<dbReference type="GO" id="GO:0030111">
    <property type="term" value="P:regulation of Wnt signaling pathway"/>
    <property type="evidence" value="ECO:0000315"/>
    <property type="project" value="MGI"/>
</dbReference>
<dbReference type="GO" id="GO:0007266">
    <property type="term" value="P:Rho protein signal transduction"/>
    <property type="evidence" value="ECO:0000315"/>
    <property type="project" value="MGI"/>
</dbReference>
<dbReference type="GO" id="GO:0036515">
    <property type="term" value="P:serotonergic neuron axon guidance"/>
    <property type="evidence" value="ECO:0000315"/>
    <property type="project" value="ParkinsonsUK-UCL"/>
</dbReference>
<dbReference type="GO" id="GO:0048103">
    <property type="term" value="P:somatic stem cell division"/>
    <property type="evidence" value="ECO:0000315"/>
    <property type="project" value="MGI"/>
</dbReference>
<dbReference type="GO" id="GO:0035019">
    <property type="term" value="P:somatic stem cell population maintenance"/>
    <property type="evidence" value="ECO:0000315"/>
    <property type="project" value="MGI"/>
</dbReference>
<dbReference type="GO" id="GO:0060071">
    <property type="term" value="P:Wnt signaling pathway, planar cell polarity pathway"/>
    <property type="evidence" value="ECO:0000315"/>
    <property type="project" value="ParkinsonsUK-UCL"/>
</dbReference>
<dbReference type="GO" id="GO:0042060">
    <property type="term" value="P:wound healing"/>
    <property type="evidence" value="ECO:0000316"/>
    <property type="project" value="MGI"/>
</dbReference>
<dbReference type="InterPro" id="IPR009539">
    <property type="entry name" value="VANGL"/>
</dbReference>
<dbReference type="PANTHER" id="PTHR20886">
    <property type="entry name" value="VANG-LIKE PROTEIN"/>
    <property type="match status" value="1"/>
</dbReference>
<dbReference type="Pfam" id="PF06638">
    <property type="entry name" value="Strabismus"/>
    <property type="match status" value="1"/>
</dbReference>
<dbReference type="PIRSF" id="PIRSF007991">
    <property type="entry name" value="Strabismus"/>
    <property type="match status" value="1"/>
</dbReference>
<organism>
    <name type="scientific">Mus musculus</name>
    <name type="common">Mouse</name>
    <dbReference type="NCBI Taxonomy" id="10090"/>
    <lineage>
        <taxon>Eukaryota</taxon>
        <taxon>Metazoa</taxon>
        <taxon>Chordata</taxon>
        <taxon>Craniata</taxon>
        <taxon>Vertebrata</taxon>
        <taxon>Euteleostomi</taxon>
        <taxon>Mammalia</taxon>
        <taxon>Eutheria</taxon>
        <taxon>Euarchontoglires</taxon>
        <taxon>Glires</taxon>
        <taxon>Rodentia</taxon>
        <taxon>Myomorpha</taxon>
        <taxon>Muroidea</taxon>
        <taxon>Muridae</taxon>
        <taxon>Murinae</taxon>
        <taxon>Mus</taxon>
        <taxon>Mus</taxon>
    </lineage>
</organism>
<evidence type="ECO:0000250" key="1">
    <source>
        <dbReference type="UniProtKB" id="Q90X64"/>
    </source>
</evidence>
<evidence type="ECO:0000255" key="2"/>
<evidence type="ECO:0000256" key="3">
    <source>
        <dbReference type="SAM" id="MobiDB-lite"/>
    </source>
</evidence>
<evidence type="ECO:0000269" key="4">
    <source>
    </source>
</evidence>
<evidence type="ECO:0000269" key="5">
    <source>
    </source>
</evidence>
<evidence type="ECO:0000269" key="6">
    <source>
    </source>
</evidence>
<evidence type="ECO:0000269" key="7">
    <source>
    </source>
</evidence>
<evidence type="ECO:0000269" key="8">
    <source>
    </source>
</evidence>
<evidence type="ECO:0000269" key="9">
    <source>
    </source>
</evidence>
<evidence type="ECO:0000269" key="10">
    <source>
    </source>
</evidence>
<evidence type="ECO:0000269" key="11">
    <source>
    </source>
</evidence>
<evidence type="ECO:0000269" key="12">
    <source>
    </source>
</evidence>
<evidence type="ECO:0000269" key="13">
    <source>
    </source>
</evidence>
<evidence type="ECO:0000305" key="14"/>
<name>VANG2_MOUSE</name>